<name>CLPP_LACJO</name>
<comment type="function">
    <text evidence="1">Cleaves peptides in various proteins in a process that requires ATP hydrolysis. Has a chymotrypsin-like activity. Plays a major role in the degradation of misfolded proteins.</text>
</comment>
<comment type="catalytic activity">
    <reaction evidence="1">
        <text>Hydrolysis of proteins to small peptides in the presence of ATP and magnesium. alpha-casein is the usual test substrate. In the absence of ATP, only oligopeptides shorter than five residues are hydrolyzed (such as succinyl-Leu-Tyr-|-NHMec, and Leu-Tyr-Leu-|-Tyr-Trp, in which cleavage of the -Tyr-|-Leu- and -Tyr-|-Trp bonds also occurs).</text>
        <dbReference type="EC" id="3.4.21.92"/>
    </reaction>
</comment>
<comment type="subunit">
    <text evidence="1">Fourteen ClpP subunits assemble into 2 heptameric rings which stack back to back to give a disk-like structure with a central cavity, resembling the structure of eukaryotic proteasomes.</text>
</comment>
<comment type="subcellular location">
    <subcellularLocation>
        <location evidence="1">Cytoplasm</location>
    </subcellularLocation>
</comment>
<comment type="similarity">
    <text evidence="1">Belongs to the peptidase S14 family.</text>
</comment>
<accession>Q74K84</accession>
<organism>
    <name type="scientific">Lactobacillus johnsonii (strain CNCM I-12250 / La1 / NCC 533)</name>
    <dbReference type="NCBI Taxonomy" id="257314"/>
    <lineage>
        <taxon>Bacteria</taxon>
        <taxon>Bacillati</taxon>
        <taxon>Bacillota</taxon>
        <taxon>Bacilli</taxon>
        <taxon>Lactobacillales</taxon>
        <taxon>Lactobacillaceae</taxon>
        <taxon>Lactobacillus</taxon>
    </lineage>
</organism>
<gene>
    <name evidence="1" type="primary">clpP</name>
    <name type="ordered locus">LJ_0869</name>
</gene>
<keyword id="KW-0963">Cytoplasm</keyword>
<keyword id="KW-0378">Hydrolase</keyword>
<keyword id="KW-0645">Protease</keyword>
<keyword id="KW-0720">Serine protease</keyword>
<feature type="chain" id="PRO_0000179572" description="ATP-dependent Clp protease proteolytic subunit">
    <location>
        <begin position="1"/>
        <end position="195"/>
    </location>
</feature>
<feature type="active site" description="Nucleophile" evidence="1">
    <location>
        <position position="97"/>
    </location>
</feature>
<feature type="active site" evidence="1">
    <location>
        <position position="122"/>
    </location>
</feature>
<sequence length="195" mass="21380">MLVPTVIEQTARGERAYDIYSRLLKDRIIMLSGEINDQMANSIIAQLLFLDAQDNTKDISLYINSPGGVITSGLAIMDTMNFIKSDVSTIAIGMAASMASILLTSGTKGKRFALPNSTVLIHQPLGGAQGQQTDIQIAANEILKSRKKLNQILHETTGQPLDKILKDTERDNYLSAEEAKDYGLIDEILVNQKKD</sequence>
<protein>
    <recommendedName>
        <fullName evidence="1">ATP-dependent Clp protease proteolytic subunit</fullName>
        <ecNumber evidence="1">3.4.21.92</ecNumber>
    </recommendedName>
    <alternativeName>
        <fullName evidence="1">Endopeptidase Clp</fullName>
    </alternativeName>
</protein>
<reference key="1">
    <citation type="journal article" date="2004" name="Proc. Natl. Acad. Sci. U.S.A.">
        <title>The genome sequence of the probiotic intestinal bacterium Lactobacillus johnsonii NCC 533.</title>
        <authorList>
            <person name="Pridmore R.D."/>
            <person name="Berger B."/>
            <person name="Desiere F."/>
            <person name="Vilanova D."/>
            <person name="Barretto C."/>
            <person name="Pittet A.-C."/>
            <person name="Zwahlen M.-C."/>
            <person name="Rouvet M."/>
            <person name="Altermann E."/>
            <person name="Barrangou R."/>
            <person name="Mollet B."/>
            <person name="Mercenier A."/>
            <person name="Klaenhammer T."/>
            <person name="Arigoni F."/>
            <person name="Schell M.A."/>
        </authorList>
    </citation>
    <scope>NUCLEOTIDE SEQUENCE [LARGE SCALE GENOMIC DNA]</scope>
    <source>
        <strain>CNCM I-1225 / La1 / NCC 533</strain>
    </source>
</reference>
<evidence type="ECO:0000255" key="1">
    <source>
        <dbReference type="HAMAP-Rule" id="MF_00444"/>
    </source>
</evidence>
<proteinExistence type="inferred from homology"/>
<dbReference type="EC" id="3.4.21.92" evidence="1"/>
<dbReference type="EMBL" id="AE017198">
    <property type="protein sequence ID" value="AAS08690.1"/>
    <property type="molecule type" value="Genomic_DNA"/>
</dbReference>
<dbReference type="RefSeq" id="WP_003647009.1">
    <property type="nucleotide sequence ID" value="NC_005362.1"/>
</dbReference>
<dbReference type="SMR" id="Q74K84"/>
<dbReference type="MEROPS" id="S14.001"/>
<dbReference type="GeneID" id="83570734"/>
<dbReference type="KEGG" id="ljo:LJ_0869"/>
<dbReference type="eggNOG" id="COG0740">
    <property type="taxonomic scope" value="Bacteria"/>
</dbReference>
<dbReference type="HOGENOM" id="CLU_058707_3_2_9"/>
<dbReference type="Proteomes" id="UP000000581">
    <property type="component" value="Chromosome"/>
</dbReference>
<dbReference type="GO" id="GO:0005737">
    <property type="term" value="C:cytoplasm"/>
    <property type="evidence" value="ECO:0007669"/>
    <property type="project" value="UniProtKB-SubCell"/>
</dbReference>
<dbReference type="GO" id="GO:0009368">
    <property type="term" value="C:endopeptidase Clp complex"/>
    <property type="evidence" value="ECO:0007669"/>
    <property type="project" value="TreeGrafter"/>
</dbReference>
<dbReference type="GO" id="GO:0004176">
    <property type="term" value="F:ATP-dependent peptidase activity"/>
    <property type="evidence" value="ECO:0007669"/>
    <property type="project" value="InterPro"/>
</dbReference>
<dbReference type="GO" id="GO:0051117">
    <property type="term" value="F:ATPase binding"/>
    <property type="evidence" value="ECO:0007669"/>
    <property type="project" value="TreeGrafter"/>
</dbReference>
<dbReference type="GO" id="GO:0004252">
    <property type="term" value="F:serine-type endopeptidase activity"/>
    <property type="evidence" value="ECO:0007669"/>
    <property type="project" value="UniProtKB-UniRule"/>
</dbReference>
<dbReference type="GO" id="GO:0006515">
    <property type="term" value="P:protein quality control for misfolded or incompletely synthesized proteins"/>
    <property type="evidence" value="ECO:0007669"/>
    <property type="project" value="TreeGrafter"/>
</dbReference>
<dbReference type="CDD" id="cd07017">
    <property type="entry name" value="S14_ClpP_2"/>
    <property type="match status" value="1"/>
</dbReference>
<dbReference type="FunFam" id="3.90.226.10:FF:000001">
    <property type="entry name" value="ATP-dependent Clp protease proteolytic subunit"/>
    <property type="match status" value="1"/>
</dbReference>
<dbReference type="Gene3D" id="3.90.226.10">
    <property type="entry name" value="2-enoyl-CoA Hydratase, Chain A, domain 1"/>
    <property type="match status" value="1"/>
</dbReference>
<dbReference type="HAMAP" id="MF_00444">
    <property type="entry name" value="ClpP"/>
    <property type="match status" value="1"/>
</dbReference>
<dbReference type="InterPro" id="IPR001907">
    <property type="entry name" value="ClpP"/>
</dbReference>
<dbReference type="InterPro" id="IPR029045">
    <property type="entry name" value="ClpP/crotonase-like_dom_sf"/>
</dbReference>
<dbReference type="InterPro" id="IPR023562">
    <property type="entry name" value="ClpP/TepA"/>
</dbReference>
<dbReference type="InterPro" id="IPR033135">
    <property type="entry name" value="ClpP_His_AS"/>
</dbReference>
<dbReference type="InterPro" id="IPR018215">
    <property type="entry name" value="ClpP_Ser_AS"/>
</dbReference>
<dbReference type="NCBIfam" id="TIGR00493">
    <property type="entry name" value="clpP"/>
    <property type="match status" value="1"/>
</dbReference>
<dbReference type="NCBIfam" id="NF001368">
    <property type="entry name" value="PRK00277.1"/>
    <property type="match status" value="1"/>
</dbReference>
<dbReference type="NCBIfam" id="NF009205">
    <property type="entry name" value="PRK12553.1"/>
    <property type="match status" value="1"/>
</dbReference>
<dbReference type="PANTHER" id="PTHR10381">
    <property type="entry name" value="ATP-DEPENDENT CLP PROTEASE PROTEOLYTIC SUBUNIT"/>
    <property type="match status" value="1"/>
</dbReference>
<dbReference type="PANTHER" id="PTHR10381:SF70">
    <property type="entry name" value="ATP-DEPENDENT CLP PROTEASE PROTEOLYTIC SUBUNIT"/>
    <property type="match status" value="1"/>
</dbReference>
<dbReference type="Pfam" id="PF00574">
    <property type="entry name" value="CLP_protease"/>
    <property type="match status" value="1"/>
</dbReference>
<dbReference type="PRINTS" id="PR00127">
    <property type="entry name" value="CLPPROTEASEP"/>
</dbReference>
<dbReference type="SUPFAM" id="SSF52096">
    <property type="entry name" value="ClpP/crotonase"/>
    <property type="match status" value="1"/>
</dbReference>
<dbReference type="PROSITE" id="PS00382">
    <property type="entry name" value="CLP_PROTEASE_HIS"/>
    <property type="match status" value="1"/>
</dbReference>
<dbReference type="PROSITE" id="PS00381">
    <property type="entry name" value="CLP_PROTEASE_SER"/>
    <property type="match status" value="1"/>
</dbReference>